<proteinExistence type="inferred from homology"/>
<sequence length="81" mass="8844">MSHSVKIYDTCIGCTQCVRACPLDVLEMVPWDGCKAGQIASSPRTEDCVGCKRCETACPTDFLSVRVYLGDETTRSMGLAY</sequence>
<name>PSAC_PROMA</name>
<protein>
    <recommendedName>
        <fullName evidence="2">Photosystem I iron-sulfur center</fullName>
        <ecNumber evidence="2">1.97.1.12</ecNumber>
    </recommendedName>
    <alternativeName>
        <fullName evidence="2">9 kDa polypeptide</fullName>
    </alternativeName>
    <alternativeName>
        <fullName evidence="2">PSI-C</fullName>
    </alternativeName>
    <alternativeName>
        <fullName evidence="2">Photosystem I subunit VII</fullName>
    </alternativeName>
    <alternativeName>
        <fullName evidence="2">PsaC</fullName>
    </alternativeName>
</protein>
<accession>Q7V9R1</accession>
<keyword id="KW-0004">4Fe-4S</keyword>
<keyword id="KW-0249">Electron transport</keyword>
<keyword id="KW-0408">Iron</keyword>
<keyword id="KW-0411">Iron-sulfur</keyword>
<keyword id="KW-0472">Membrane</keyword>
<keyword id="KW-0479">Metal-binding</keyword>
<keyword id="KW-0560">Oxidoreductase</keyword>
<keyword id="KW-0602">Photosynthesis</keyword>
<keyword id="KW-0603">Photosystem I</keyword>
<keyword id="KW-1185">Reference proteome</keyword>
<keyword id="KW-0677">Repeat</keyword>
<keyword id="KW-0793">Thylakoid</keyword>
<keyword id="KW-0813">Transport</keyword>
<organism>
    <name type="scientific">Prochlorococcus marinus (strain SARG / CCMP1375 / SS120)</name>
    <dbReference type="NCBI Taxonomy" id="167539"/>
    <lineage>
        <taxon>Bacteria</taxon>
        <taxon>Bacillati</taxon>
        <taxon>Cyanobacteriota</taxon>
        <taxon>Cyanophyceae</taxon>
        <taxon>Synechococcales</taxon>
        <taxon>Prochlorococcaceae</taxon>
        <taxon>Prochlorococcus</taxon>
    </lineage>
</organism>
<reference key="1">
    <citation type="journal article" date="2003" name="Proc. Natl. Acad. Sci. U.S.A.">
        <title>Genome sequence of the cyanobacterium Prochlorococcus marinus SS120, a nearly minimal oxyphototrophic genome.</title>
        <authorList>
            <person name="Dufresne A."/>
            <person name="Salanoubat M."/>
            <person name="Partensky F."/>
            <person name="Artiguenave F."/>
            <person name="Axmann I.M."/>
            <person name="Barbe V."/>
            <person name="Duprat S."/>
            <person name="Galperin M.Y."/>
            <person name="Koonin E.V."/>
            <person name="Le Gall F."/>
            <person name="Makarova K.S."/>
            <person name="Ostrowski M."/>
            <person name="Oztas S."/>
            <person name="Robert C."/>
            <person name="Rogozin I.B."/>
            <person name="Scanlan D.J."/>
            <person name="Tandeau de Marsac N."/>
            <person name="Weissenbach J."/>
            <person name="Wincker P."/>
            <person name="Wolf Y.I."/>
            <person name="Hess W.R."/>
        </authorList>
    </citation>
    <scope>NUCLEOTIDE SEQUENCE [LARGE SCALE GENOMIC DNA]</scope>
    <source>
        <strain>SARG / CCMP1375 / SS120</strain>
    </source>
</reference>
<gene>
    <name evidence="2" type="primary">psaC</name>
    <name type="ordered locus">Pro_1767</name>
</gene>
<dbReference type="EC" id="1.97.1.12" evidence="2"/>
<dbReference type="EMBL" id="AE017126">
    <property type="protein sequence ID" value="AAQ00811.1"/>
    <property type="molecule type" value="Genomic_DNA"/>
</dbReference>
<dbReference type="RefSeq" id="NP_876158.1">
    <property type="nucleotide sequence ID" value="NC_005042.1"/>
</dbReference>
<dbReference type="RefSeq" id="WP_011125916.1">
    <property type="nucleotide sequence ID" value="NC_005042.1"/>
</dbReference>
<dbReference type="SMR" id="Q7V9R1"/>
<dbReference type="STRING" id="167539.Pro_1767"/>
<dbReference type="EnsemblBacteria" id="AAQ00811">
    <property type="protein sequence ID" value="AAQ00811"/>
    <property type="gene ID" value="Pro_1767"/>
</dbReference>
<dbReference type="KEGG" id="pma:Pro_1767"/>
<dbReference type="PATRIC" id="fig|167539.5.peg.1866"/>
<dbReference type="eggNOG" id="COG1143">
    <property type="taxonomic scope" value="Bacteria"/>
</dbReference>
<dbReference type="HOGENOM" id="CLU_139698_8_0_3"/>
<dbReference type="OrthoDB" id="9804603at2"/>
<dbReference type="Proteomes" id="UP000001420">
    <property type="component" value="Chromosome"/>
</dbReference>
<dbReference type="GO" id="GO:0009522">
    <property type="term" value="C:photosystem I"/>
    <property type="evidence" value="ECO:0007669"/>
    <property type="project" value="UniProtKB-KW"/>
</dbReference>
<dbReference type="GO" id="GO:0031676">
    <property type="term" value="C:plasma membrane-derived thylakoid membrane"/>
    <property type="evidence" value="ECO:0007669"/>
    <property type="project" value="UniProtKB-SubCell"/>
</dbReference>
<dbReference type="GO" id="GO:0051539">
    <property type="term" value="F:4 iron, 4 sulfur cluster binding"/>
    <property type="evidence" value="ECO:0007669"/>
    <property type="project" value="UniProtKB-KW"/>
</dbReference>
<dbReference type="GO" id="GO:0009055">
    <property type="term" value="F:electron transfer activity"/>
    <property type="evidence" value="ECO:0007669"/>
    <property type="project" value="UniProtKB-UniRule"/>
</dbReference>
<dbReference type="GO" id="GO:0046872">
    <property type="term" value="F:metal ion binding"/>
    <property type="evidence" value="ECO:0007669"/>
    <property type="project" value="UniProtKB-KW"/>
</dbReference>
<dbReference type="GO" id="GO:0016491">
    <property type="term" value="F:oxidoreductase activity"/>
    <property type="evidence" value="ECO:0007669"/>
    <property type="project" value="UniProtKB-KW"/>
</dbReference>
<dbReference type="GO" id="GO:0009773">
    <property type="term" value="P:photosynthetic electron transport in photosystem I"/>
    <property type="evidence" value="ECO:0007669"/>
    <property type="project" value="InterPro"/>
</dbReference>
<dbReference type="FunFam" id="3.30.70.20:FF:000001">
    <property type="entry name" value="Photosystem I iron-sulfur center"/>
    <property type="match status" value="1"/>
</dbReference>
<dbReference type="Gene3D" id="3.30.70.20">
    <property type="match status" value="1"/>
</dbReference>
<dbReference type="HAMAP" id="MF_01303">
    <property type="entry name" value="PSI_PsaC"/>
    <property type="match status" value="1"/>
</dbReference>
<dbReference type="InterPro" id="IPR017896">
    <property type="entry name" value="4Fe4S_Fe-S-bd"/>
</dbReference>
<dbReference type="InterPro" id="IPR017900">
    <property type="entry name" value="4Fe4S_Fe_S_CS"/>
</dbReference>
<dbReference type="InterPro" id="IPR050157">
    <property type="entry name" value="PSI_iron-sulfur_center"/>
</dbReference>
<dbReference type="InterPro" id="IPR017491">
    <property type="entry name" value="PSI_PsaC"/>
</dbReference>
<dbReference type="NCBIfam" id="TIGR03048">
    <property type="entry name" value="PS_I_psaC"/>
    <property type="match status" value="1"/>
</dbReference>
<dbReference type="PANTHER" id="PTHR24960:SF79">
    <property type="entry name" value="PHOTOSYSTEM I IRON-SULFUR CENTER"/>
    <property type="match status" value="1"/>
</dbReference>
<dbReference type="PANTHER" id="PTHR24960">
    <property type="entry name" value="PHOTOSYSTEM I IRON-SULFUR CENTER-RELATED"/>
    <property type="match status" value="1"/>
</dbReference>
<dbReference type="Pfam" id="PF12838">
    <property type="entry name" value="Fer4_7"/>
    <property type="match status" value="1"/>
</dbReference>
<dbReference type="SUPFAM" id="SSF54862">
    <property type="entry name" value="4Fe-4S ferredoxins"/>
    <property type="match status" value="1"/>
</dbReference>
<dbReference type="PROSITE" id="PS00198">
    <property type="entry name" value="4FE4S_FER_1"/>
    <property type="match status" value="2"/>
</dbReference>
<dbReference type="PROSITE" id="PS51379">
    <property type="entry name" value="4FE4S_FER_2"/>
    <property type="match status" value="2"/>
</dbReference>
<feature type="initiator methionine" description="Removed" evidence="1">
    <location>
        <position position="1"/>
    </location>
</feature>
<feature type="chain" id="PRO_0000062015" description="Photosystem I iron-sulfur center">
    <location>
        <begin position="2"/>
        <end position="81"/>
    </location>
</feature>
<feature type="domain" description="4Fe-4S ferredoxin-type 1" evidence="2">
    <location>
        <begin position="2"/>
        <end position="31"/>
    </location>
</feature>
<feature type="domain" description="4Fe-4S ferredoxin-type 2" evidence="2">
    <location>
        <begin position="37"/>
        <end position="68"/>
    </location>
</feature>
<feature type="binding site" evidence="2">
    <location>
        <position position="11"/>
    </location>
    <ligand>
        <name>[4Fe-4S] cluster</name>
        <dbReference type="ChEBI" id="CHEBI:49883"/>
        <label>1</label>
    </ligand>
</feature>
<feature type="binding site" evidence="2">
    <location>
        <position position="14"/>
    </location>
    <ligand>
        <name>[4Fe-4S] cluster</name>
        <dbReference type="ChEBI" id="CHEBI:49883"/>
        <label>1</label>
    </ligand>
</feature>
<feature type="binding site" evidence="2">
    <location>
        <position position="17"/>
    </location>
    <ligand>
        <name>[4Fe-4S] cluster</name>
        <dbReference type="ChEBI" id="CHEBI:49883"/>
        <label>1</label>
    </ligand>
</feature>
<feature type="binding site" evidence="2">
    <location>
        <position position="21"/>
    </location>
    <ligand>
        <name>[4Fe-4S] cluster</name>
        <dbReference type="ChEBI" id="CHEBI:49883"/>
        <label>2</label>
    </ligand>
</feature>
<feature type="binding site" evidence="2">
    <location>
        <position position="48"/>
    </location>
    <ligand>
        <name>[4Fe-4S] cluster</name>
        <dbReference type="ChEBI" id="CHEBI:49883"/>
        <label>2</label>
    </ligand>
</feature>
<feature type="binding site" evidence="2">
    <location>
        <position position="51"/>
    </location>
    <ligand>
        <name>[4Fe-4S] cluster</name>
        <dbReference type="ChEBI" id="CHEBI:49883"/>
        <label>2</label>
    </ligand>
</feature>
<feature type="binding site" evidence="2">
    <location>
        <position position="54"/>
    </location>
    <ligand>
        <name>[4Fe-4S] cluster</name>
        <dbReference type="ChEBI" id="CHEBI:49883"/>
        <label>2</label>
    </ligand>
</feature>
<feature type="binding site" evidence="2">
    <location>
        <position position="58"/>
    </location>
    <ligand>
        <name>[4Fe-4S] cluster</name>
        <dbReference type="ChEBI" id="CHEBI:49883"/>
        <label>1</label>
    </ligand>
</feature>
<comment type="function">
    <text evidence="2">Apoprotein for the two 4Fe-4S centers FA and FB of photosystem I (PSI); essential for photochemical activity. FB is the terminal electron acceptor of PSI, donating electrons to ferredoxin. The C-terminus interacts with PsaA/B/D and helps assemble the protein into the PSI complex. Required for binding of PsaD and PsaE to PSI. PSI is a plastocyanin/cytochrome c6-ferredoxin oxidoreductase, converting photonic excitation into a charge separation, which transfers an electron from the donor P700 chlorophyll pair to the spectroscopically characterized acceptors A0, A1, FX, FA and FB in turn.</text>
</comment>
<comment type="catalytic activity">
    <reaction evidence="2">
        <text>reduced [plastocyanin] + hnu + oxidized [2Fe-2S]-[ferredoxin] = oxidized [plastocyanin] + reduced [2Fe-2S]-[ferredoxin]</text>
        <dbReference type="Rhea" id="RHEA:30407"/>
        <dbReference type="Rhea" id="RHEA-COMP:10000"/>
        <dbReference type="Rhea" id="RHEA-COMP:10001"/>
        <dbReference type="Rhea" id="RHEA-COMP:10039"/>
        <dbReference type="Rhea" id="RHEA-COMP:10040"/>
        <dbReference type="ChEBI" id="CHEBI:29036"/>
        <dbReference type="ChEBI" id="CHEBI:30212"/>
        <dbReference type="ChEBI" id="CHEBI:33737"/>
        <dbReference type="ChEBI" id="CHEBI:33738"/>
        <dbReference type="ChEBI" id="CHEBI:49552"/>
        <dbReference type="EC" id="1.97.1.12"/>
    </reaction>
</comment>
<comment type="cofactor">
    <cofactor evidence="2">
        <name>[4Fe-4S] cluster</name>
        <dbReference type="ChEBI" id="CHEBI:49883"/>
    </cofactor>
    <text evidence="2">Binds 2 [4Fe-4S] clusters. Cluster 2 is most probably the spectroscopically characterized electron acceptor FA and cluster 1 is most probably FB.</text>
</comment>
<comment type="subunit">
    <text evidence="2">The cyanobacterial PSI reaction center is composed of one copy each of PsaA,B,C,D,E,F,I,J,K,L,M and X, and forms trimeric complexes.</text>
</comment>
<comment type="subcellular location">
    <subcellularLocation>
        <location evidence="2">Cellular thylakoid membrane</location>
        <topology evidence="2">Peripheral membrane protein</topology>
        <orientation evidence="2">Cytoplasmic side</orientation>
    </subcellularLocation>
</comment>
<evidence type="ECO:0000250" key="1"/>
<evidence type="ECO:0000255" key="2">
    <source>
        <dbReference type="HAMAP-Rule" id="MF_01303"/>
    </source>
</evidence>